<protein>
    <recommendedName>
        <fullName evidence="1">Anamorsin homolog</fullName>
    </recommendedName>
    <alternativeName>
        <fullName evidence="1">Fe-S cluster assembly protein DRE2 homolog</fullName>
    </alternativeName>
</protein>
<evidence type="ECO:0000255" key="1">
    <source>
        <dbReference type="HAMAP-Rule" id="MF_03115"/>
    </source>
</evidence>
<gene>
    <name evidence="1" type="primary">CIAPIN1</name>
    <name evidence="1" type="synonym">l(2)35Bg</name>
    <name type="ORF">GA18008</name>
</gene>
<keyword id="KW-0001">2Fe-2S</keyword>
<keyword id="KW-0004">4Fe-4S</keyword>
<keyword id="KW-0963">Cytoplasm</keyword>
<keyword id="KW-0408">Iron</keyword>
<keyword id="KW-0411">Iron-sulfur</keyword>
<keyword id="KW-0479">Metal-binding</keyword>
<keyword id="KW-0496">Mitochondrion</keyword>
<keyword id="KW-1185">Reference proteome</keyword>
<name>DRE2_DROPS</name>
<sequence length="247" mass="26917">MEQFKGLQKSLYIWTDSADLDKRVEQLKTATGGEVAVENVHRLSFSSYANSSFDLIVIECAQLTDNYVKLLHMLKPSGKLHLFSFIGPASSLLQEIKLSGFINCSEGTDTLTAEKPGYETGSSARLSFAKKNASALNVWKISGDDEELIDEEDLLDEEDKQKPDPAGLKVCSTTGKRKACKNCSCGLAEELESEKQTATASENAKSSCGNCYLGDAFRCSTCPYLGMPAFKPGEKVQLADNLLKSDI</sequence>
<proteinExistence type="inferred from homology"/>
<feature type="chain" id="PRO_0000392320" description="Anamorsin homolog">
    <location>
        <begin position="1"/>
        <end position="247"/>
    </location>
</feature>
<feature type="region of interest" description="N-terminal SAM-like domain" evidence="1">
    <location>
        <begin position="4"/>
        <end position="128"/>
    </location>
</feature>
<feature type="region of interest" description="Linker" evidence="1">
    <location>
        <begin position="129"/>
        <end position="160"/>
    </location>
</feature>
<feature type="region of interest" description="Fe-S binding site A" evidence="1">
    <location>
        <begin position="171"/>
        <end position="185"/>
    </location>
</feature>
<feature type="region of interest" description="Fe-S binding site B" evidence="1">
    <location>
        <begin position="208"/>
        <end position="222"/>
    </location>
</feature>
<feature type="short sequence motif" description="Cx2C motif 1" evidence="1">
    <location>
        <begin position="208"/>
        <end position="211"/>
    </location>
</feature>
<feature type="short sequence motif" description="Cx2C motif 2" evidence="1">
    <location>
        <begin position="219"/>
        <end position="222"/>
    </location>
</feature>
<feature type="binding site" evidence="1">
    <location>
        <position position="171"/>
    </location>
    <ligand>
        <name>[2Fe-2S] cluster</name>
        <dbReference type="ChEBI" id="CHEBI:190135"/>
    </ligand>
</feature>
<feature type="binding site" evidence="1">
    <location>
        <position position="180"/>
    </location>
    <ligand>
        <name>[2Fe-2S] cluster</name>
        <dbReference type="ChEBI" id="CHEBI:190135"/>
    </ligand>
</feature>
<feature type="binding site" evidence="1">
    <location>
        <position position="183"/>
    </location>
    <ligand>
        <name>[2Fe-2S] cluster</name>
        <dbReference type="ChEBI" id="CHEBI:190135"/>
    </ligand>
</feature>
<feature type="binding site" evidence="1">
    <location>
        <position position="185"/>
    </location>
    <ligand>
        <name>[2Fe-2S] cluster</name>
        <dbReference type="ChEBI" id="CHEBI:190135"/>
    </ligand>
</feature>
<feature type="binding site" evidence="1">
    <location>
        <position position="208"/>
    </location>
    <ligand>
        <name>[4Fe-4S] cluster</name>
        <dbReference type="ChEBI" id="CHEBI:49883"/>
    </ligand>
</feature>
<feature type="binding site" evidence="1">
    <location>
        <position position="211"/>
    </location>
    <ligand>
        <name>[4Fe-4S] cluster</name>
        <dbReference type="ChEBI" id="CHEBI:49883"/>
    </ligand>
</feature>
<feature type="binding site" evidence="1">
    <location>
        <position position="219"/>
    </location>
    <ligand>
        <name>[4Fe-4S] cluster</name>
        <dbReference type="ChEBI" id="CHEBI:49883"/>
    </ligand>
</feature>
<feature type="binding site" evidence="1">
    <location>
        <position position="222"/>
    </location>
    <ligand>
        <name>[4Fe-4S] cluster</name>
        <dbReference type="ChEBI" id="CHEBI:49883"/>
    </ligand>
</feature>
<comment type="function">
    <text evidence="1">Component of the cytosolic iron-sulfur (Fe-S) protein assembly (CIA) machinery. Required for the maturation of extramitochondrial Fe-S proteins. Part of an electron transfer chain functioning in an early step of cytosolic Fe-S biogenesis, facilitating the de novo assembly of a [4Fe-4S] cluster on the cytosolic Fe-S scaffold complex. Electrons are transferred from NADPH via a FAD- and FMN-containing diflavin oxidoreductase. Together with the diflavin oxidoreductase, also required for the assembly of the diferric tyrosyl radical cofactor of ribonucleotide reductase (RNR), probably by providing electrons for reduction during radical cofactor maturation in the catalytic small subunit.</text>
</comment>
<comment type="cofactor">
    <cofactor evidence="1">
        <name>[2Fe-2S] cluster</name>
        <dbReference type="ChEBI" id="CHEBI:190135"/>
    </cofactor>
</comment>
<comment type="cofactor">
    <cofactor evidence="1">
        <name>[4Fe-4S] cluster</name>
        <dbReference type="ChEBI" id="CHEBI:49883"/>
    </cofactor>
</comment>
<comment type="subunit">
    <text evidence="1">Monomer.</text>
</comment>
<comment type="subcellular location">
    <subcellularLocation>
        <location evidence="1">Cytoplasm</location>
    </subcellularLocation>
    <subcellularLocation>
        <location evidence="1">Mitochondrion intermembrane space</location>
    </subcellularLocation>
</comment>
<comment type="domain">
    <text evidence="1">The C-terminal domain binds 2 Fe-S clusters but is otherwise mostly in an intrinsically disordered conformation.</text>
</comment>
<comment type="domain">
    <text evidence="1">The N-terminal domain has structural similarity with S-adenosyl-L-methionine-dependent methyltransferases, but does not bind S-adenosyl-L-methionine. It is required for correct assembly of the 2 Fe-S clusters.</text>
</comment>
<comment type="domain">
    <text evidence="1">The twin Cx2C motifs are involved in the recognition by the mitochondrial MIA40-ERV1 disulfide relay system. The formation of 2 disulfide bonds in the Cx2C motifs through dithiol/disulfide exchange reactions effectively traps the protein in the mitochondrial intermembrane space.</text>
</comment>
<comment type="similarity">
    <text evidence="1">Belongs to the anamorsin family.</text>
</comment>
<reference key="1">
    <citation type="journal article" date="2005" name="Genome Res.">
        <title>Comparative genome sequencing of Drosophila pseudoobscura: chromosomal, gene, and cis-element evolution.</title>
        <authorList>
            <person name="Richards S."/>
            <person name="Liu Y."/>
            <person name="Bettencourt B.R."/>
            <person name="Hradecky P."/>
            <person name="Letovsky S."/>
            <person name="Nielsen R."/>
            <person name="Thornton K."/>
            <person name="Hubisz M.J."/>
            <person name="Chen R."/>
            <person name="Meisel R.P."/>
            <person name="Couronne O."/>
            <person name="Hua S."/>
            <person name="Smith M.A."/>
            <person name="Zhang P."/>
            <person name="Liu J."/>
            <person name="Bussemaker H.J."/>
            <person name="van Batenburg M.F."/>
            <person name="Howells S.L."/>
            <person name="Scherer S.E."/>
            <person name="Sodergren E."/>
            <person name="Matthews B.B."/>
            <person name="Crosby M.A."/>
            <person name="Schroeder A.J."/>
            <person name="Ortiz-Barrientos D."/>
            <person name="Rives C.M."/>
            <person name="Metzker M.L."/>
            <person name="Muzny D.M."/>
            <person name="Scott G."/>
            <person name="Steffen D."/>
            <person name="Wheeler D.A."/>
            <person name="Worley K.C."/>
            <person name="Havlak P."/>
            <person name="Durbin K.J."/>
            <person name="Egan A."/>
            <person name="Gill R."/>
            <person name="Hume J."/>
            <person name="Morgan M.B."/>
            <person name="Miner G."/>
            <person name="Hamilton C."/>
            <person name="Huang Y."/>
            <person name="Waldron L."/>
            <person name="Verduzco D."/>
            <person name="Clerc-Blankenburg K.P."/>
            <person name="Dubchak I."/>
            <person name="Noor M.A.F."/>
            <person name="Anderson W."/>
            <person name="White K.P."/>
            <person name="Clark A.G."/>
            <person name="Schaeffer S.W."/>
            <person name="Gelbart W.M."/>
            <person name="Weinstock G.M."/>
            <person name="Gibbs R.A."/>
        </authorList>
    </citation>
    <scope>NUCLEOTIDE SEQUENCE [LARGE SCALE GENOMIC DNA]</scope>
    <source>
        <strain>MV2-25 / Tucson 14011-0121.94</strain>
    </source>
</reference>
<organism>
    <name type="scientific">Drosophila pseudoobscura pseudoobscura</name>
    <name type="common">Fruit fly</name>
    <dbReference type="NCBI Taxonomy" id="46245"/>
    <lineage>
        <taxon>Eukaryota</taxon>
        <taxon>Metazoa</taxon>
        <taxon>Ecdysozoa</taxon>
        <taxon>Arthropoda</taxon>
        <taxon>Hexapoda</taxon>
        <taxon>Insecta</taxon>
        <taxon>Pterygota</taxon>
        <taxon>Neoptera</taxon>
        <taxon>Endopterygota</taxon>
        <taxon>Diptera</taxon>
        <taxon>Brachycera</taxon>
        <taxon>Muscomorpha</taxon>
        <taxon>Ephydroidea</taxon>
        <taxon>Drosophilidae</taxon>
        <taxon>Drosophila</taxon>
        <taxon>Sophophora</taxon>
    </lineage>
</organism>
<accession>Q29P70</accession>
<dbReference type="EMBL" id="CH379058">
    <property type="protein sequence ID" value="EAL34423.1"/>
    <property type="molecule type" value="Genomic_DNA"/>
</dbReference>
<dbReference type="RefSeq" id="XP_001357354.1">
    <property type="nucleotide sequence ID" value="XM_001357318.3"/>
</dbReference>
<dbReference type="FunCoup" id="Q29P70">
    <property type="interactions" value="2261"/>
</dbReference>
<dbReference type="STRING" id="46245.Q29P70"/>
<dbReference type="EnsemblMetazoa" id="FBtr0280925">
    <property type="protein sequence ID" value="FBpp0279363"/>
    <property type="gene ID" value="FBgn0078017"/>
</dbReference>
<dbReference type="GeneID" id="4817989"/>
<dbReference type="KEGG" id="dpo:4817989"/>
<dbReference type="CTD" id="57019"/>
<dbReference type="eggNOG" id="KOG4020">
    <property type="taxonomic scope" value="Eukaryota"/>
</dbReference>
<dbReference type="HOGENOM" id="CLU_064393_1_0_1"/>
<dbReference type="InParanoid" id="Q29P70"/>
<dbReference type="OMA" id="GFINCRE"/>
<dbReference type="PhylomeDB" id="Q29P70"/>
<dbReference type="Proteomes" id="UP000001819">
    <property type="component" value="Chromosome 4"/>
</dbReference>
<dbReference type="Bgee" id="FBgn0078017">
    <property type="expression patterns" value="Expressed in female reproductive system and 3 other cell types or tissues"/>
</dbReference>
<dbReference type="GO" id="GO:0005758">
    <property type="term" value="C:mitochondrial intermembrane space"/>
    <property type="evidence" value="ECO:0007669"/>
    <property type="project" value="UniProtKB-SubCell"/>
</dbReference>
<dbReference type="GO" id="GO:0051537">
    <property type="term" value="F:2 iron, 2 sulfur cluster binding"/>
    <property type="evidence" value="ECO:0007669"/>
    <property type="project" value="UniProtKB-UniRule"/>
</dbReference>
<dbReference type="GO" id="GO:0051539">
    <property type="term" value="F:4 iron, 4 sulfur cluster binding"/>
    <property type="evidence" value="ECO:0007669"/>
    <property type="project" value="UniProtKB-KW"/>
</dbReference>
<dbReference type="GO" id="GO:0009055">
    <property type="term" value="F:electron transfer activity"/>
    <property type="evidence" value="ECO:0007669"/>
    <property type="project" value="UniProtKB-UniRule"/>
</dbReference>
<dbReference type="GO" id="GO:0046872">
    <property type="term" value="F:metal ion binding"/>
    <property type="evidence" value="ECO:0007669"/>
    <property type="project" value="UniProtKB-KW"/>
</dbReference>
<dbReference type="GO" id="GO:0016226">
    <property type="term" value="P:iron-sulfur cluster assembly"/>
    <property type="evidence" value="ECO:0007669"/>
    <property type="project" value="UniProtKB-UniRule"/>
</dbReference>
<dbReference type="Gene3D" id="3.40.50.150">
    <property type="entry name" value="Vaccinia Virus protein VP39"/>
    <property type="match status" value="1"/>
</dbReference>
<dbReference type="HAMAP" id="MF_03115">
    <property type="entry name" value="Anamorsin"/>
    <property type="match status" value="1"/>
</dbReference>
<dbReference type="InterPro" id="IPR007785">
    <property type="entry name" value="Anamorsin"/>
</dbReference>
<dbReference type="InterPro" id="IPR049011">
    <property type="entry name" value="Anamorsin_N_metazoan"/>
</dbReference>
<dbReference type="InterPro" id="IPR046408">
    <property type="entry name" value="CIAPIN1"/>
</dbReference>
<dbReference type="InterPro" id="IPR029063">
    <property type="entry name" value="SAM-dependent_MTases_sf"/>
</dbReference>
<dbReference type="PANTHER" id="PTHR13273">
    <property type="entry name" value="ANAMORSIN"/>
    <property type="match status" value="1"/>
</dbReference>
<dbReference type="PANTHER" id="PTHR13273:SF14">
    <property type="entry name" value="ANAMORSIN"/>
    <property type="match status" value="1"/>
</dbReference>
<dbReference type="Pfam" id="PF20922">
    <property type="entry name" value="Anamorsin_N"/>
    <property type="match status" value="1"/>
</dbReference>
<dbReference type="Pfam" id="PF05093">
    <property type="entry name" value="CIAPIN1"/>
    <property type="match status" value="2"/>
</dbReference>